<gene>
    <name type="primary">PDC1</name>
</gene>
<organism>
    <name type="scientific">Kluyveromyces marxianus</name>
    <name type="common">Yeast</name>
    <name type="synonym">Candida kefyr</name>
    <dbReference type="NCBI Taxonomy" id="4911"/>
    <lineage>
        <taxon>Eukaryota</taxon>
        <taxon>Fungi</taxon>
        <taxon>Dikarya</taxon>
        <taxon>Ascomycota</taxon>
        <taxon>Saccharomycotina</taxon>
        <taxon>Saccharomycetes</taxon>
        <taxon>Saccharomycetales</taxon>
        <taxon>Saccharomycetaceae</taxon>
        <taxon>Kluyveromyces</taxon>
    </lineage>
</organism>
<protein>
    <recommendedName>
        <fullName>Pyruvate decarboxylase</fullName>
        <ecNumber>4.1.1.1</ecNumber>
    </recommendedName>
</protein>
<keyword id="KW-0210">Decarboxylase</keyword>
<keyword id="KW-0456">Lyase</keyword>
<keyword id="KW-0460">Magnesium</keyword>
<keyword id="KW-0479">Metal-binding</keyword>
<keyword id="KW-0786">Thiamine pyrophosphate</keyword>
<sequence length="564" mass="61901">MSEITLGRYLFERLKQVEVQTIFGLPGDFNLSLLDKIYEVPGMRWAGNANELNAAYAADGYARLKGMACVITTFGVGELSALNGIAGSYAEHVGVLHVVGVPSISSQAKQLLLHHTLGNGDFTVFHRMSSNISETTAMITDINSAPSEIDRCIRTTYISQRPVYLGLPANLVDLKVPASLLETPIDLSLKPNDPEAENEVLETVLELIKDAKNPVILADACCSRHNVKAETKKLIDITQFPAFVTPMGKGSIDEQHPRFGGVYVGTLSSPEVKEAVESADLVLSVGALLSDFNTGSFSYSYKTKNIVEFHSDYIKVRNATFPGVQMKFVLQKLLTKVKDAAKGYKPVPVPHAPRDNKPVADSTPLKQEWVWTQVGKFLQEGDVVLTETGTSAFGINQTHFPNDTYGISQVLWGSIGFTGGATLGAAFAAEEIDPKKRVILFIGDGSLQLTVQEISTMIRWGLKPYLFVLNNDGYTIERLIHGETAQYNCIQSWKHLDLLPTFGAKDYEAVRVATTGEWNKLTTDKKFQENSKIRLIEVMLPVMDAPSNLVKQAQLTASINAKQE</sequence>
<proteinExistence type="inferred from homology"/>
<accession>P33149</accession>
<comment type="catalytic activity">
    <reaction>
        <text>a 2-oxocarboxylate + H(+) = an aldehyde + CO2</text>
        <dbReference type="Rhea" id="RHEA:11628"/>
        <dbReference type="ChEBI" id="CHEBI:15378"/>
        <dbReference type="ChEBI" id="CHEBI:16526"/>
        <dbReference type="ChEBI" id="CHEBI:17478"/>
        <dbReference type="ChEBI" id="CHEBI:35179"/>
        <dbReference type="EC" id="4.1.1.1"/>
    </reaction>
</comment>
<comment type="catalytic activity">
    <reaction evidence="1">
        <text>pyruvate + H(+) = acetaldehyde + CO2</text>
        <dbReference type="Rhea" id="RHEA:45484"/>
        <dbReference type="ChEBI" id="CHEBI:15343"/>
        <dbReference type="ChEBI" id="CHEBI:15361"/>
        <dbReference type="ChEBI" id="CHEBI:15378"/>
        <dbReference type="ChEBI" id="CHEBI:16526"/>
    </reaction>
</comment>
<comment type="cofactor">
    <cofactor evidence="1">
        <name>Mg(2+)</name>
        <dbReference type="ChEBI" id="CHEBI:18420"/>
    </cofactor>
    <text evidence="1">Binds 1 Mg(2+) per subunit.</text>
</comment>
<comment type="cofactor">
    <cofactor evidence="1">
        <name>thiamine diphosphate</name>
        <dbReference type="ChEBI" id="CHEBI:58937"/>
    </cofactor>
    <text evidence="1">Binds 1 thiamine pyrophosphate per subunit.</text>
</comment>
<comment type="subunit">
    <text>Homotetramer.</text>
</comment>
<comment type="similarity">
    <text evidence="2">Belongs to the TPP enzyme family.</text>
</comment>
<name>PDC1_KLUMA</name>
<feature type="chain" id="PRO_0000090766" description="Pyruvate decarboxylase">
    <location>
        <begin position="1"/>
        <end position="564"/>
    </location>
</feature>
<feature type="binding site" evidence="1">
    <location>
        <position position="28"/>
    </location>
    <ligand>
        <name>pyruvate</name>
        <dbReference type="ChEBI" id="CHEBI:15361"/>
        <note>ligand shared between two neighboring subunits</note>
    </ligand>
</feature>
<feature type="binding site" evidence="1">
    <location>
        <position position="115"/>
    </location>
    <ligand>
        <name>pyruvate</name>
        <dbReference type="ChEBI" id="CHEBI:15361"/>
        <note>ligand shared between two neighboring subunits</note>
    </ligand>
</feature>
<feature type="binding site" evidence="1">
    <location>
        <position position="390"/>
    </location>
    <ligand>
        <name>thiamine diphosphate</name>
        <dbReference type="ChEBI" id="CHEBI:58937"/>
    </ligand>
</feature>
<feature type="binding site" evidence="1">
    <location>
        <begin position="413"/>
        <end position="415"/>
    </location>
    <ligand>
        <name>thiamine diphosphate</name>
        <dbReference type="ChEBI" id="CHEBI:58937"/>
    </ligand>
</feature>
<feature type="binding site" evidence="1">
    <location>
        <position position="444"/>
    </location>
    <ligand>
        <name>Mg(2+)</name>
        <dbReference type="ChEBI" id="CHEBI:18420"/>
    </ligand>
</feature>
<feature type="binding site" evidence="1">
    <location>
        <begin position="445"/>
        <end position="446"/>
    </location>
    <ligand>
        <name>thiamine diphosphate</name>
        <dbReference type="ChEBI" id="CHEBI:58937"/>
    </ligand>
</feature>
<feature type="binding site" evidence="1">
    <location>
        <begin position="471"/>
        <end position="476"/>
    </location>
    <ligand>
        <name>thiamine diphosphate</name>
        <dbReference type="ChEBI" id="CHEBI:58937"/>
    </ligand>
</feature>
<feature type="binding site" evidence="1">
    <location>
        <position position="471"/>
    </location>
    <ligand>
        <name>Mg(2+)</name>
        <dbReference type="ChEBI" id="CHEBI:18420"/>
    </ligand>
</feature>
<feature type="binding site" evidence="1">
    <location>
        <position position="473"/>
    </location>
    <ligand>
        <name>Mg(2+)</name>
        <dbReference type="ChEBI" id="CHEBI:18420"/>
    </ligand>
</feature>
<feature type="binding site" evidence="1">
    <location>
        <position position="477"/>
    </location>
    <ligand>
        <name>pyruvate</name>
        <dbReference type="ChEBI" id="CHEBI:15361"/>
        <note>ligand shared between two neighboring subunits</note>
    </ligand>
</feature>
<evidence type="ECO:0000250" key="1">
    <source>
        <dbReference type="UniProtKB" id="P06169"/>
    </source>
</evidence>
<evidence type="ECO:0000305" key="2"/>
<dbReference type="EC" id="4.1.1.1"/>
<dbReference type="EMBL" id="L09727">
    <property type="protein sequence ID" value="AAA35267.1"/>
    <property type="molecule type" value="Genomic_DNA"/>
</dbReference>
<dbReference type="PIR" id="S36363">
    <property type="entry name" value="S36363"/>
</dbReference>
<dbReference type="SMR" id="P33149"/>
<dbReference type="VEuPathDB" id="FungiDB:KLMA_60075"/>
<dbReference type="OrthoDB" id="19017at4893"/>
<dbReference type="GO" id="GO:0005829">
    <property type="term" value="C:cytosol"/>
    <property type="evidence" value="ECO:0007669"/>
    <property type="project" value="TreeGrafter"/>
</dbReference>
<dbReference type="GO" id="GO:0005634">
    <property type="term" value="C:nucleus"/>
    <property type="evidence" value="ECO:0007669"/>
    <property type="project" value="TreeGrafter"/>
</dbReference>
<dbReference type="GO" id="GO:0000287">
    <property type="term" value="F:magnesium ion binding"/>
    <property type="evidence" value="ECO:0007669"/>
    <property type="project" value="InterPro"/>
</dbReference>
<dbReference type="GO" id="GO:0004737">
    <property type="term" value="F:pyruvate decarboxylase activity"/>
    <property type="evidence" value="ECO:0007669"/>
    <property type="project" value="UniProtKB-EC"/>
</dbReference>
<dbReference type="GO" id="GO:0030976">
    <property type="term" value="F:thiamine pyrophosphate binding"/>
    <property type="evidence" value="ECO:0007669"/>
    <property type="project" value="InterPro"/>
</dbReference>
<dbReference type="GO" id="GO:0000949">
    <property type="term" value="P:aromatic amino acid family catabolic process to alcohol via Ehrlich pathway"/>
    <property type="evidence" value="ECO:0007669"/>
    <property type="project" value="TreeGrafter"/>
</dbReference>
<dbReference type="CDD" id="cd02005">
    <property type="entry name" value="TPP_PDC_IPDC"/>
    <property type="match status" value="1"/>
</dbReference>
<dbReference type="CDD" id="cd07038">
    <property type="entry name" value="TPP_PYR_PDC_IPDC_like"/>
    <property type="match status" value="1"/>
</dbReference>
<dbReference type="FunFam" id="3.40.50.1220:FF:000018">
    <property type="entry name" value="Pyruvate decarboxylase isozyme"/>
    <property type="match status" value="1"/>
</dbReference>
<dbReference type="FunFam" id="3.40.50.970:FF:000019">
    <property type="entry name" value="Pyruvate decarboxylase isozyme"/>
    <property type="match status" value="1"/>
</dbReference>
<dbReference type="FunFam" id="3.40.50.970:FF:000024">
    <property type="entry name" value="Pyruvate decarboxylase isozyme"/>
    <property type="match status" value="1"/>
</dbReference>
<dbReference type="Gene3D" id="3.40.50.970">
    <property type="match status" value="2"/>
</dbReference>
<dbReference type="Gene3D" id="3.40.50.1220">
    <property type="entry name" value="TPP-binding domain"/>
    <property type="match status" value="1"/>
</dbReference>
<dbReference type="InterPro" id="IPR029035">
    <property type="entry name" value="DHS-like_NAD/FAD-binding_dom"/>
</dbReference>
<dbReference type="InterPro" id="IPR012110">
    <property type="entry name" value="PDC/IPDC-like"/>
</dbReference>
<dbReference type="InterPro" id="IPR029061">
    <property type="entry name" value="THDP-binding"/>
</dbReference>
<dbReference type="InterPro" id="IPR012000">
    <property type="entry name" value="Thiamin_PyroP_enz_cen_dom"/>
</dbReference>
<dbReference type="InterPro" id="IPR012001">
    <property type="entry name" value="Thiamin_PyroP_enz_TPP-bd_dom"/>
</dbReference>
<dbReference type="InterPro" id="IPR000399">
    <property type="entry name" value="TPP-bd_CS"/>
</dbReference>
<dbReference type="InterPro" id="IPR011766">
    <property type="entry name" value="TPP_enzyme_TPP-bd"/>
</dbReference>
<dbReference type="InterPro" id="IPR047214">
    <property type="entry name" value="TPP_PDC_IPDC"/>
</dbReference>
<dbReference type="InterPro" id="IPR047213">
    <property type="entry name" value="TPP_PYR_PDC_IPDC-like"/>
</dbReference>
<dbReference type="PANTHER" id="PTHR43452">
    <property type="entry name" value="PYRUVATE DECARBOXYLASE"/>
    <property type="match status" value="1"/>
</dbReference>
<dbReference type="PANTHER" id="PTHR43452:SF30">
    <property type="entry name" value="PYRUVATE DECARBOXYLASE ISOZYME 1-RELATED"/>
    <property type="match status" value="1"/>
</dbReference>
<dbReference type="Pfam" id="PF02775">
    <property type="entry name" value="TPP_enzyme_C"/>
    <property type="match status" value="1"/>
</dbReference>
<dbReference type="Pfam" id="PF00205">
    <property type="entry name" value="TPP_enzyme_M"/>
    <property type="match status" value="1"/>
</dbReference>
<dbReference type="Pfam" id="PF02776">
    <property type="entry name" value="TPP_enzyme_N"/>
    <property type="match status" value="1"/>
</dbReference>
<dbReference type="PIRSF" id="PIRSF036565">
    <property type="entry name" value="Pyruvt_ip_decrb"/>
    <property type="match status" value="1"/>
</dbReference>
<dbReference type="SUPFAM" id="SSF52467">
    <property type="entry name" value="DHS-like NAD/FAD-binding domain"/>
    <property type="match status" value="1"/>
</dbReference>
<dbReference type="SUPFAM" id="SSF52518">
    <property type="entry name" value="Thiamin diphosphate-binding fold (THDP-binding)"/>
    <property type="match status" value="2"/>
</dbReference>
<dbReference type="PROSITE" id="PS00187">
    <property type="entry name" value="TPP_ENZYMES"/>
    <property type="match status" value="1"/>
</dbReference>
<reference key="1">
    <citation type="journal article" date="1993" name="Curr. Genet.">
        <title>The isolation and nucleotide sequence of the pyruvate decarboxylase gene from Kluyveromyces marxianus.</title>
        <authorList>
            <person name="Holloway P."/>
            <person name="Subden R.E."/>
        </authorList>
    </citation>
    <scope>NUCLEOTIDE SEQUENCE [GENOMIC DNA]</scope>
</reference>